<sequence>MDKLIIGGVEIKNRLFVGSGKYPSNEIIKDVLEGSGSQVITLALRRVDLDNKEEDILQNIPKDVILLPNTSGATNAEEAIRIARIARAMGCGNWIKIEVISDSKYLLPDNEETIKATKVLADEGFIVLPYMCPDLYAGRRLIEAGAAAVMPLGAPIGSNRGLKTKELIQIMIDELDIPIIVDAGIGKPSQAMEAMEMGAAACLVNTAIASSEDPINMARAFKMAVEGGRLAYEAKMGRESKFGNASSPLTGFLD</sequence>
<name>THIG_CLOPS</name>
<accession>Q0SSM0</accession>
<protein>
    <recommendedName>
        <fullName evidence="1">Thiazole synthase</fullName>
        <ecNumber evidence="1">2.8.1.10</ecNumber>
    </recommendedName>
</protein>
<feature type="chain" id="PRO_1000026002" description="Thiazole synthase">
    <location>
        <begin position="1"/>
        <end position="254"/>
    </location>
</feature>
<feature type="active site" description="Schiff-base intermediate with DXP" evidence="1">
    <location>
        <position position="96"/>
    </location>
</feature>
<feature type="binding site" evidence="1">
    <location>
        <position position="157"/>
    </location>
    <ligand>
        <name>1-deoxy-D-xylulose 5-phosphate</name>
        <dbReference type="ChEBI" id="CHEBI:57792"/>
    </ligand>
</feature>
<feature type="binding site" evidence="1">
    <location>
        <begin position="183"/>
        <end position="184"/>
    </location>
    <ligand>
        <name>1-deoxy-D-xylulose 5-phosphate</name>
        <dbReference type="ChEBI" id="CHEBI:57792"/>
    </ligand>
</feature>
<feature type="binding site" evidence="1">
    <location>
        <begin position="205"/>
        <end position="206"/>
    </location>
    <ligand>
        <name>1-deoxy-D-xylulose 5-phosphate</name>
        <dbReference type="ChEBI" id="CHEBI:57792"/>
    </ligand>
</feature>
<evidence type="ECO:0000255" key="1">
    <source>
        <dbReference type="HAMAP-Rule" id="MF_00443"/>
    </source>
</evidence>
<keyword id="KW-0963">Cytoplasm</keyword>
<keyword id="KW-0704">Schiff base</keyword>
<keyword id="KW-0784">Thiamine biosynthesis</keyword>
<keyword id="KW-0808">Transferase</keyword>
<dbReference type="EC" id="2.8.1.10" evidence="1"/>
<dbReference type="EMBL" id="CP000312">
    <property type="protein sequence ID" value="ABG87109.1"/>
    <property type="molecule type" value="Genomic_DNA"/>
</dbReference>
<dbReference type="RefSeq" id="WP_003449693.1">
    <property type="nucleotide sequence ID" value="NC_008262.1"/>
</dbReference>
<dbReference type="SMR" id="Q0SSM0"/>
<dbReference type="KEGG" id="cpr:CPR_1571"/>
<dbReference type="UniPathway" id="UPA00060"/>
<dbReference type="Proteomes" id="UP000001824">
    <property type="component" value="Chromosome"/>
</dbReference>
<dbReference type="GO" id="GO:0005737">
    <property type="term" value="C:cytoplasm"/>
    <property type="evidence" value="ECO:0007669"/>
    <property type="project" value="UniProtKB-SubCell"/>
</dbReference>
<dbReference type="GO" id="GO:1990107">
    <property type="term" value="F:thiazole synthase activity"/>
    <property type="evidence" value="ECO:0007669"/>
    <property type="project" value="UniProtKB-EC"/>
</dbReference>
<dbReference type="GO" id="GO:0009229">
    <property type="term" value="P:thiamine diphosphate biosynthetic process"/>
    <property type="evidence" value="ECO:0007669"/>
    <property type="project" value="UniProtKB-UniRule"/>
</dbReference>
<dbReference type="CDD" id="cd04728">
    <property type="entry name" value="ThiG"/>
    <property type="match status" value="1"/>
</dbReference>
<dbReference type="Gene3D" id="3.20.20.70">
    <property type="entry name" value="Aldolase class I"/>
    <property type="match status" value="1"/>
</dbReference>
<dbReference type="HAMAP" id="MF_00443">
    <property type="entry name" value="ThiG"/>
    <property type="match status" value="1"/>
</dbReference>
<dbReference type="InterPro" id="IPR013785">
    <property type="entry name" value="Aldolase_TIM"/>
</dbReference>
<dbReference type="InterPro" id="IPR033983">
    <property type="entry name" value="Thiazole_synthase_ThiG"/>
</dbReference>
<dbReference type="InterPro" id="IPR008867">
    <property type="entry name" value="ThiG"/>
</dbReference>
<dbReference type="PANTHER" id="PTHR34266">
    <property type="entry name" value="THIAZOLE SYNTHASE"/>
    <property type="match status" value="1"/>
</dbReference>
<dbReference type="PANTHER" id="PTHR34266:SF2">
    <property type="entry name" value="THIAZOLE SYNTHASE"/>
    <property type="match status" value="1"/>
</dbReference>
<dbReference type="Pfam" id="PF05690">
    <property type="entry name" value="ThiG"/>
    <property type="match status" value="1"/>
</dbReference>
<dbReference type="SUPFAM" id="SSF110399">
    <property type="entry name" value="ThiG-like"/>
    <property type="match status" value="1"/>
</dbReference>
<gene>
    <name evidence="1" type="primary">thiG</name>
    <name type="ordered locus">CPR_1571</name>
</gene>
<proteinExistence type="inferred from homology"/>
<comment type="function">
    <text evidence="1">Catalyzes the rearrangement of 1-deoxy-D-xylulose 5-phosphate (DXP) to produce the thiazole phosphate moiety of thiamine. Sulfur is provided by the thiocarboxylate moiety of the carrier protein ThiS. In vitro, sulfur can be provided by H(2)S.</text>
</comment>
<comment type="catalytic activity">
    <reaction evidence="1">
        <text>[ThiS sulfur-carrier protein]-C-terminal-Gly-aminoethanethioate + 2-iminoacetate + 1-deoxy-D-xylulose 5-phosphate = [ThiS sulfur-carrier protein]-C-terminal Gly-Gly + 2-[(2R,5Z)-2-carboxy-4-methylthiazol-5(2H)-ylidene]ethyl phosphate + 2 H2O + H(+)</text>
        <dbReference type="Rhea" id="RHEA:26297"/>
        <dbReference type="Rhea" id="RHEA-COMP:12909"/>
        <dbReference type="Rhea" id="RHEA-COMP:19908"/>
        <dbReference type="ChEBI" id="CHEBI:15377"/>
        <dbReference type="ChEBI" id="CHEBI:15378"/>
        <dbReference type="ChEBI" id="CHEBI:57792"/>
        <dbReference type="ChEBI" id="CHEBI:62899"/>
        <dbReference type="ChEBI" id="CHEBI:77846"/>
        <dbReference type="ChEBI" id="CHEBI:90778"/>
        <dbReference type="ChEBI" id="CHEBI:232372"/>
        <dbReference type="EC" id="2.8.1.10"/>
    </reaction>
</comment>
<comment type="pathway">
    <text evidence="1">Cofactor biosynthesis; thiamine diphosphate biosynthesis.</text>
</comment>
<comment type="subunit">
    <text evidence="1">Homotetramer. Forms heterodimers with either ThiH or ThiS.</text>
</comment>
<comment type="subcellular location">
    <subcellularLocation>
        <location evidence="1">Cytoplasm</location>
    </subcellularLocation>
</comment>
<comment type="similarity">
    <text evidence="1">Belongs to the ThiG family.</text>
</comment>
<reference key="1">
    <citation type="journal article" date="2006" name="Genome Res.">
        <title>Skewed genomic variability in strains of the toxigenic bacterial pathogen, Clostridium perfringens.</title>
        <authorList>
            <person name="Myers G.S.A."/>
            <person name="Rasko D.A."/>
            <person name="Cheung J.K."/>
            <person name="Ravel J."/>
            <person name="Seshadri R."/>
            <person name="DeBoy R.T."/>
            <person name="Ren Q."/>
            <person name="Varga J."/>
            <person name="Awad M.M."/>
            <person name="Brinkac L.M."/>
            <person name="Daugherty S.C."/>
            <person name="Haft D.H."/>
            <person name="Dodson R.J."/>
            <person name="Madupu R."/>
            <person name="Nelson W.C."/>
            <person name="Rosovitz M.J."/>
            <person name="Sullivan S.A."/>
            <person name="Khouri H."/>
            <person name="Dimitrov G.I."/>
            <person name="Watkins K.L."/>
            <person name="Mulligan S."/>
            <person name="Benton J."/>
            <person name="Radune D."/>
            <person name="Fisher D.J."/>
            <person name="Atkins H.S."/>
            <person name="Hiscox T."/>
            <person name="Jost B.H."/>
            <person name="Billington S.J."/>
            <person name="Songer J.G."/>
            <person name="McClane B.A."/>
            <person name="Titball R.W."/>
            <person name="Rood J.I."/>
            <person name="Melville S.B."/>
            <person name="Paulsen I.T."/>
        </authorList>
    </citation>
    <scope>NUCLEOTIDE SEQUENCE [LARGE SCALE GENOMIC DNA]</scope>
    <source>
        <strain>SM101 / Type A</strain>
    </source>
</reference>
<organism>
    <name type="scientific">Clostridium perfringens (strain SM101 / Type A)</name>
    <dbReference type="NCBI Taxonomy" id="289380"/>
    <lineage>
        <taxon>Bacteria</taxon>
        <taxon>Bacillati</taxon>
        <taxon>Bacillota</taxon>
        <taxon>Clostridia</taxon>
        <taxon>Eubacteriales</taxon>
        <taxon>Clostridiaceae</taxon>
        <taxon>Clostridium</taxon>
    </lineage>
</organism>